<comment type="function">
    <text evidence="1">Digests double-stranded RNA. Involved in the processing of primary rRNA transcript to yield the immediate precursors to the large and small rRNAs (23S and 16S). Processes some mRNAs, and tRNAs when they are encoded in the rRNA operon. Processes pre-crRNA and tracrRNA of type II CRISPR loci if present in the organism.</text>
</comment>
<comment type="catalytic activity">
    <reaction evidence="1">
        <text>Endonucleolytic cleavage to 5'-phosphomonoester.</text>
        <dbReference type="EC" id="3.1.26.3"/>
    </reaction>
</comment>
<comment type="cofactor">
    <cofactor evidence="1">
        <name>Mg(2+)</name>
        <dbReference type="ChEBI" id="CHEBI:18420"/>
    </cofactor>
</comment>
<comment type="subunit">
    <text evidence="1">Homodimer.</text>
</comment>
<comment type="subcellular location">
    <subcellularLocation>
        <location evidence="1">Cytoplasm</location>
    </subcellularLocation>
</comment>
<comment type="similarity">
    <text evidence="1">Belongs to the ribonuclease III family.</text>
</comment>
<organism>
    <name type="scientific">Escherichia coli O45:K1 (strain S88 / ExPEC)</name>
    <dbReference type="NCBI Taxonomy" id="585035"/>
    <lineage>
        <taxon>Bacteria</taxon>
        <taxon>Pseudomonadati</taxon>
        <taxon>Pseudomonadota</taxon>
        <taxon>Gammaproteobacteria</taxon>
        <taxon>Enterobacterales</taxon>
        <taxon>Enterobacteriaceae</taxon>
        <taxon>Escherichia</taxon>
    </lineage>
</organism>
<reference key="1">
    <citation type="journal article" date="2009" name="PLoS Genet.">
        <title>Organised genome dynamics in the Escherichia coli species results in highly diverse adaptive paths.</title>
        <authorList>
            <person name="Touchon M."/>
            <person name="Hoede C."/>
            <person name="Tenaillon O."/>
            <person name="Barbe V."/>
            <person name="Baeriswyl S."/>
            <person name="Bidet P."/>
            <person name="Bingen E."/>
            <person name="Bonacorsi S."/>
            <person name="Bouchier C."/>
            <person name="Bouvet O."/>
            <person name="Calteau A."/>
            <person name="Chiapello H."/>
            <person name="Clermont O."/>
            <person name="Cruveiller S."/>
            <person name="Danchin A."/>
            <person name="Diard M."/>
            <person name="Dossat C."/>
            <person name="Karoui M.E."/>
            <person name="Frapy E."/>
            <person name="Garry L."/>
            <person name="Ghigo J.M."/>
            <person name="Gilles A.M."/>
            <person name="Johnson J."/>
            <person name="Le Bouguenec C."/>
            <person name="Lescat M."/>
            <person name="Mangenot S."/>
            <person name="Martinez-Jehanne V."/>
            <person name="Matic I."/>
            <person name="Nassif X."/>
            <person name="Oztas S."/>
            <person name="Petit M.A."/>
            <person name="Pichon C."/>
            <person name="Rouy Z."/>
            <person name="Ruf C.S."/>
            <person name="Schneider D."/>
            <person name="Tourret J."/>
            <person name="Vacherie B."/>
            <person name="Vallenet D."/>
            <person name="Medigue C."/>
            <person name="Rocha E.P.C."/>
            <person name="Denamur E."/>
        </authorList>
    </citation>
    <scope>NUCLEOTIDE SEQUENCE [LARGE SCALE GENOMIC DNA]</scope>
    <source>
        <strain>S88 / ExPEC</strain>
    </source>
</reference>
<gene>
    <name evidence="1" type="primary">rnc</name>
    <name type="ordered locus">ECS88_2740</name>
</gene>
<sequence length="226" mass="25550">MNPIVINRLQRKLGYTFNHQELLQQALTHRSASSKHNERLEFLGDSILSYVIANALYHRFPRVDEGDMSRMRATLVRGNTLAELAREFELGECLRLGPGELKSGGFRRESILADTVEALIGGVFLDSDIQTVEKLILNWYQTRLDEISPGDKQKDPKTRLQEYLQGRHLPLPTYLVVQVRGEAHDQEFTIHCQVSGLSEPVVGTGSSRRKAEQAAAEQALKKLELE</sequence>
<accession>B7MIQ2</accession>
<name>RNC_ECO45</name>
<dbReference type="EC" id="3.1.26.3" evidence="1"/>
<dbReference type="EMBL" id="CU928161">
    <property type="protein sequence ID" value="CAR04004.1"/>
    <property type="molecule type" value="Genomic_DNA"/>
</dbReference>
<dbReference type="RefSeq" id="WP_001068343.1">
    <property type="nucleotide sequence ID" value="NC_011742.1"/>
</dbReference>
<dbReference type="SMR" id="B7MIQ2"/>
<dbReference type="GeneID" id="93774524"/>
<dbReference type="KEGG" id="ecz:ECS88_2740"/>
<dbReference type="HOGENOM" id="CLU_000907_1_1_6"/>
<dbReference type="Proteomes" id="UP000000747">
    <property type="component" value="Chromosome"/>
</dbReference>
<dbReference type="GO" id="GO:0005737">
    <property type="term" value="C:cytoplasm"/>
    <property type="evidence" value="ECO:0007669"/>
    <property type="project" value="UniProtKB-SubCell"/>
</dbReference>
<dbReference type="GO" id="GO:0003725">
    <property type="term" value="F:double-stranded RNA binding"/>
    <property type="evidence" value="ECO:0007669"/>
    <property type="project" value="TreeGrafter"/>
</dbReference>
<dbReference type="GO" id="GO:0046872">
    <property type="term" value="F:metal ion binding"/>
    <property type="evidence" value="ECO:0007669"/>
    <property type="project" value="UniProtKB-KW"/>
</dbReference>
<dbReference type="GO" id="GO:0004525">
    <property type="term" value="F:ribonuclease III activity"/>
    <property type="evidence" value="ECO:0007669"/>
    <property type="project" value="UniProtKB-UniRule"/>
</dbReference>
<dbReference type="GO" id="GO:0019843">
    <property type="term" value="F:rRNA binding"/>
    <property type="evidence" value="ECO:0007669"/>
    <property type="project" value="UniProtKB-KW"/>
</dbReference>
<dbReference type="GO" id="GO:0006397">
    <property type="term" value="P:mRNA processing"/>
    <property type="evidence" value="ECO:0007669"/>
    <property type="project" value="UniProtKB-UniRule"/>
</dbReference>
<dbReference type="GO" id="GO:0010468">
    <property type="term" value="P:regulation of gene expression"/>
    <property type="evidence" value="ECO:0007669"/>
    <property type="project" value="TreeGrafter"/>
</dbReference>
<dbReference type="GO" id="GO:0006364">
    <property type="term" value="P:rRNA processing"/>
    <property type="evidence" value="ECO:0007669"/>
    <property type="project" value="UniProtKB-UniRule"/>
</dbReference>
<dbReference type="GO" id="GO:0008033">
    <property type="term" value="P:tRNA processing"/>
    <property type="evidence" value="ECO:0007669"/>
    <property type="project" value="UniProtKB-KW"/>
</dbReference>
<dbReference type="CDD" id="cd10845">
    <property type="entry name" value="DSRM_RNAse_III_family"/>
    <property type="match status" value="1"/>
</dbReference>
<dbReference type="CDD" id="cd00593">
    <property type="entry name" value="RIBOc"/>
    <property type="match status" value="1"/>
</dbReference>
<dbReference type="FunFam" id="1.10.1520.10:FF:000001">
    <property type="entry name" value="Ribonuclease 3"/>
    <property type="match status" value="1"/>
</dbReference>
<dbReference type="FunFam" id="3.30.160.20:FF:000003">
    <property type="entry name" value="Ribonuclease 3"/>
    <property type="match status" value="1"/>
</dbReference>
<dbReference type="Gene3D" id="3.30.160.20">
    <property type="match status" value="1"/>
</dbReference>
<dbReference type="Gene3D" id="1.10.1520.10">
    <property type="entry name" value="Ribonuclease III domain"/>
    <property type="match status" value="1"/>
</dbReference>
<dbReference type="HAMAP" id="MF_00104">
    <property type="entry name" value="RNase_III"/>
    <property type="match status" value="1"/>
</dbReference>
<dbReference type="InterPro" id="IPR014720">
    <property type="entry name" value="dsRBD_dom"/>
</dbReference>
<dbReference type="InterPro" id="IPR011907">
    <property type="entry name" value="RNase_III"/>
</dbReference>
<dbReference type="InterPro" id="IPR000999">
    <property type="entry name" value="RNase_III_dom"/>
</dbReference>
<dbReference type="InterPro" id="IPR036389">
    <property type="entry name" value="RNase_III_sf"/>
</dbReference>
<dbReference type="NCBIfam" id="TIGR02191">
    <property type="entry name" value="RNaseIII"/>
    <property type="match status" value="1"/>
</dbReference>
<dbReference type="PANTHER" id="PTHR11207:SF0">
    <property type="entry name" value="RIBONUCLEASE 3"/>
    <property type="match status" value="1"/>
</dbReference>
<dbReference type="PANTHER" id="PTHR11207">
    <property type="entry name" value="RIBONUCLEASE III"/>
    <property type="match status" value="1"/>
</dbReference>
<dbReference type="Pfam" id="PF00035">
    <property type="entry name" value="dsrm"/>
    <property type="match status" value="1"/>
</dbReference>
<dbReference type="Pfam" id="PF14622">
    <property type="entry name" value="Ribonucleas_3_3"/>
    <property type="match status" value="1"/>
</dbReference>
<dbReference type="SMART" id="SM00358">
    <property type="entry name" value="DSRM"/>
    <property type="match status" value="1"/>
</dbReference>
<dbReference type="SMART" id="SM00535">
    <property type="entry name" value="RIBOc"/>
    <property type="match status" value="1"/>
</dbReference>
<dbReference type="SUPFAM" id="SSF54768">
    <property type="entry name" value="dsRNA-binding domain-like"/>
    <property type="match status" value="1"/>
</dbReference>
<dbReference type="SUPFAM" id="SSF69065">
    <property type="entry name" value="RNase III domain-like"/>
    <property type="match status" value="1"/>
</dbReference>
<dbReference type="PROSITE" id="PS50137">
    <property type="entry name" value="DS_RBD"/>
    <property type="match status" value="1"/>
</dbReference>
<dbReference type="PROSITE" id="PS00517">
    <property type="entry name" value="RNASE_3_1"/>
    <property type="match status" value="1"/>
</dbReference>
<dbReference type="PROSITE" id="PS50142">
    <property type="entry name" value="RNASE_3_2"/>
    <property type="match status" value="1"/>
</dbReference>
<protein>
    <recommendedName>
        <fullName evidence="1">Ribonuclease 3</fullName>
        <ecNumber evidence="1">3.1.26.3</ecNumber>
    </recommendedName>
    <alternativeName>
        <fullName evidence="1">Ribonuclease III</fullName>
        <shortName evidence="1">RNase III</shortName>
    </alternativeName>
</protein>
<proteinExistence type="inferred from homology"/>
<evidence type="ECO:0000255" key="1">
    <source>
        <dbReference type="HAMAP-Rule" id="MF_00104"/>
    </source>
</evidence>
<feature type="chain" id="PRO_1000194425" description="Ribonuclease 3">
    <location>
        <begin position="1"/>
        <end position="226"/>
    </location>
</feature>
<feature type="domain" description="RNase III" evidence="1">
    <location>
        <begin position="6"/>
        <end position="128"/>
    </location>
</feature>
<feature type="domain" description="DRBM" evidence="1">
    <location>
        <begin position="155"/>
        <end position="225"/>
    </location>
</feature>
<feature type="active site" evidence="1">
    <location>
        <position position="45"/>
    </location>
</feature>
<feature type="active site" evidence="1">
    <location>
        <position position="117"/>
    </location>
</feature>
<feature type="binding site" evidence="1">
    <location>
        <position position="41"/>
    </location>
    <ligand>
        <name>Mg(2+)</name>
        <dbReference type="ChEBI" id="CHEBI:18420"/>
    </ligand>
</feature>
<feature type="binding site" evidence="1">
    <location>
        <position position="114"/>
    </location>
    <ligand>
        <name>Mg(2+)</name>
        <dbReference type="ChEBI" id="CHEBI:18420"/>
    </ligand>
</feature>
<feature type="binding site" evidence="1">
    <location>
        <position position="117"/>
    </location>
    <ligand>
        <name>Mg(2+)</name>
        <dbReference type="ChEBI" id="CHEBI:18420"/>
    </ligand>
</feature>
<keyword id="KW-0963">Cytoplasm</keyword>
<keyword id="KW-0255">Endonuclease</keyword>
<keyword id="KW-0378">Hydrolase</keyword>
<keyword id="KW-0460">Magnesium</keyword>
<keyword id="KW-0479">Metal-binding</keyword>
<keyword id="KW-0507">mRNA processing</keyword>
<keyword id="KW-0540">Nuclease</keyword>
<keyword id="KW-1185">Reference proteome</keyword>
<keyword id="KW-0694">RNA-binding</keyword>
<keyword id="KW-0698">rRNA processing</keyword>
<keyword id="KW-0699">rRNA-binding</keyword>
<keyword id="KW-0819">tRNA processing</keyword>